<feature type="chain" id="PRO_1000078915" description="Large ribosomal subunit protein bL33">
    <location>
        <begin position="1"/>
        <end position="64"/>
    </location>
</feature>
<evidence type="ECO:0000255" key="1">
    <source>
        <dbReference type="HAMAP-Rule" id="MF_00294"/>
    </source>
</evidence>
<evidence type="ECO:0000305" key="2"/>
<gene>
    <name evidence="1" type="primary">rpmG</name>
    <name evidence="1" type="synonym">rpl33</name>
    <name type="ordered locus">MAE_48040</name>
</gene>
<comment type="similarity">
    <text evidence="1">Belongs to the bacterial ribosomal protein bL33 family.</text>
</comment>
<name>RL33_MICAN</name>
<organism>
    <name type="scientific">Microcystis aeruginosa (strain NIES-843 / IAM M-2473)</name>
    <dbReference type="NCBI Taxonomy" id="449447"/>
    <lineage>
        <taxon>Bacteria</taxon>
        <taxon>Bacillati</taxon>
        <taxon>Cyanobacteriota</taxon>
        <taxon>Cyanophyceae</taxon>
        <taxon>Oscillatoriophycideae</taxon>
        <taxon>Chroococcales</taxon>
        <taxon>Microcystaceae</taxon>
        <taxon>Microcystis</taxon>
    </lineage>
</organism>
<sequence length="64" mass="7401">MASKKGVRLIITVECTECRSNPDKRTPGVSRYTTSKNRRNTTGRLEIKKYCPHCNKHTVHKEIK</sequence>
<keyword id="KW-0687">Ribonucleoprotein</keyword>
<keyword id="KW-0689">Ribosomal protein</keyword>
<reference key="1">
    <citation type="journal article" date="2007" name="DNA Res.">
        <title>Complete genomic structure of the bloom-forming toxic cyanobacterium Microcystis aeruginosa NIES-843.</title>
        <authorList>
            <person name="Kaneko T."/>
            <person name="Nakajima N."/>
            <person name="Okamoto S."/>
            <person name="Suzuki I."/>
            <person name="Tanabe Y."/>
            <person name="Tamaoki M."/>
            <person name="Nakamura Y."/>
            <person name="Kasai F."/>
            <person name="Watanabe A."/>
            <person name="Kawashima K."/>
            <person name="Kishida Y."/>
            <person name="Ono A."/>
            <person name="Shimizu Y."/>
            <person name="Takahashi C."/>
            <person name="Minami C."/>
            <person name="Fujishiro T."/>
            <person name="Kohara M."/>
            <person name="Katoh M."/>
            <person name="Nakazaki N."/>
            <person name="Nakayama S."/>
            <person name="Yamada M."/>
            <person name="Tabata S."/>
            <person name="Watanabe M.M."/>
        </authorList>
    </citation>
    <scope>NUCLEOTIDE SEQUENCE [LARGE SCALE GENOMIC DNA]</scope>
    <source>
        <strain>NIES-843 / IAM M-247</strain>
    </source>
</reference>
<dbReference type="EMBL" id="AP009552">
    <property type="protein sequence ID" value="BAG04626.1"/>
    <property type="molecule type" value="Genomic_DNA"/>
</dbReference>
<dbReference type="RefSeq" id="WP_002734724.1">
    <property type="nucleotide sequence ID" value="NC_010296.1"/>
</dbReference>
<dbReference type="STRING" id="449447.MAE_48040"/>
<dbReference type="PaxDb" id="449447-MAE_48040"/>
<dbReference type="EnsemblBacteria" id="BAG04626">
    <property type="protein sequence ID" value="BAG04626"/>
    <property type="gene ID" value="MAE_48040"/>
</dbReference>
<dbReference type="GeneID" id="66709347"/>
<dbReference type="KEGG" id="mar:MAE_48040"/>
<dbReference type="eggNOG" id="COG0267">
    <property type="taxonomic scope" value="Bacteria"/>
</dbReference>
<dbReference type="HOGENOM" id="CLU_190949_3_0_3"/>
<dbReference type="BioCyc" id="MAER449447:MAE_RS30580-MONOMER"/>
<dbReference type="Proteomes" id="UP000001510">
    <property type="component" value="Chromosome"/>
</dbReference>
<dbReference type="GO" id="GO:0005737">
    <property type="term" value="C:cytoplasm"/>
    <property type="evidence" value="ECO:0007669"/>
    <property type="project" value="UniProtKB-ARBA"/>
</dbReference>
<dbReference type="GO" id="GO:1990904">
    <property type="term" value="C:ribonucleoprotein complex"/>
    <property type="evidence" value="ECO:0007669"/>
    <property type="project" value="UniProtKB-KW"/>
</dbReference>
<dbReference type="GO" id="GO:0005840">
    <property type="term" value="C:ribosome"/>
    <property type="evidence" value="ECO:0007669"/>
    <property type="project" value="UniProtKB-KW"/>
</dbReference>
<dbReference type="GO" id="GO:0003735">
    <property type="term" value="F:structural constituent of ribosome"/>
    <property type="evidence" value="ECO:0007669"/>
    <property type="project" value="InterPro"/>
</dbReference>
<dbReference type="GO" id="GO:0006412">
    <property type="term" value="P:translation"/>
    <property type="evidence" value="ECO:0007669"/>
    <property type="project" value="UniProtKB-UniRule"/>
</dbReference>
<dbReference type="Gene3D" id="2.20.28.120">
    <property type="entry name" value="Ribosomal protein L33"/>
    <property type="match status" value="1"/>
</dbReference>
<dbReference type="HAMAP" id="MF_00294">
    <property type="entry name" value="Ribosomal_bL33"/>
    <property type="match status" value="1"/>
</dbReference>
<dbReference type="InterPro" id="IPR001705">
    <property type="entry name" value="Ribosomal_bL33"/>
</dbReference>
<dbReference type="InterPro" id="IPR018264">
    <property type="entry name" value="Ribosomal_bL33_CS"/>
</dbReference>
<dbReference type="InterPro" id="IPR038584">
    <property type="entry name" value="Ribosomal_bL33_sf"/>
</dbReference>
<dbReference type="InterPro" id="IPR011332">
    <property type="entry name" value="Ribosomal_zn-bd"/>
</dbReference>
<dbReference type="NCBIfam" id="NF001764">
    <property type="entry name" value="PRK00504.1"/>
    <property type="match status" value="1"/>
</dbReference>
<dbReference type="NCBIfam" id="NF001860">
    <property type="entry name" value="PRK00595.1"/>
    <property type="match status" value="1"/>
</dbReference>
<dbReference type="NCBIfam" id="TIGR01023">
    <property type="entry name" value="rpmG_bact"/>
    <property type="match status" value="1"/>
</dbReference>
<dbReference type="PANTHER" id="PTHR43168">
    <property type="entry name" value="50S RIBOSOMAL PROTEIN L33, CHLOROPLASTIC"/>
    <property type="match status" value="1"/>
</dbReference>
<dbReference type="PANTHER" id="PTHR43168:SF2">
    <property type="entry name" value="LARGE RIBOSOMAL SUBUNIT PROTEIN BL33C"/>
    <property type="match status" value="1"/>
</dbReference>
<dbReference type="Pfam" id="PF00471">
    <property type="entry name" value="Ribosomal_L33"/>
    <property type="match status" value="1"/>
</dbReference>
<dbReference type="SUPFAM" id="SSF57829">
    <property type="entry name" value="Zn-binding ribosomal proteins"/>
    <property type="match status" value="1"/>
</dbReference>
<dbReference type="PROSITE" id="PS00582">
    <property type="entry name" value="RIBOSOMAL_L33"/>
    <property type="match status" value="1"/>
</dbReference>
<accession>B0JVN3</accession>
<protein>
    <recommendedName>
        <fullName evidence="1">Large ribosomal subunit protein bL33</fullName>
    </recommendedName>
    <alternativeName>
        <fullName evidence="2">50S ribosomal protein L33</fullName>
    </alternativeName>
</protein>
<proteinExistence type="inferred from homology"/>